<feature type="chain" id="PRO_0000354829" description="Catalase-peroxidase">
    <location>
        <begin position="1"/>
        <end position="737"/>
    </location>
</feature>
<feature type="region of interest" description="Disordered" evidence="2">
    <location>
        <begin position="1"/>
        <end position="32"/>
    </location>
</feature>
<feature type="compositionally biased region" description="Polar residues" evidence="2">
    <location>
        <begin position="20"/>
        <end position="32"/>
    </location>
</feature>
<feature type="active site" description="Proton acceptor" evidence="1">
    <location>
        <position position="104"/>
    </location>
</feature>
<feature type="binding site" description="axial binding residue" evidence="1">
    <location>
        <position position="267"/>
    </location>
    <ligand>
        <name>heme b</name>
        <dbReference type="ChEBI" id="CHEBI:60344"/>
    </ligand>
    <ligandPart>
        <name>Fe</name>
        <dbReference type="ChEBI" id="CHEBI:18248"/>
    </ligandPart>
</feature>
<feature type="site" description="Transition state stabilizer" evidence="1">
    <location>
        <position position="100"/>
    </location>
</feature>
<feature type="cross-link" description="Tryptophyl-tyrosyl-methioninium (Trp-Tyr) (with M-252)" evidence="1">
    <location>
        <begin position="103"/>
        <end position="226"/>
    </location>
</feature>
<feature type="cross-link" description="Tryptophyl-tyrosyl-methioninium (Tyr-Met) (with W-103)" evidence="1">
    <location>
        <begin position="226"/>
        <end position="252"/>
    </location>
</feature>
<name>KATG_MARMS</name>
<accession>A6VVN4</accession>
<reference key="1">
    <citation type="submission" date="2007-06" db="EMBL/GenBank/DDBJ databases">
        <title>Complete sequence of Marinomonas sp. MWYL1.</title>
        <authorList>
            <consortium name="US DOE Joint Genome Institute"/>
            <person name="Copeland A."/>
            <person name="Lucas S."/>
            <person name="Lapidus A."/>
            <person name="Barry K."/>
            <person name="Glavina del Rio T."/>
            <person name="Dalin E."/>
            <person name="Tice H."/>
            <person name="Pitluck S."/>
            <person name="Kiss H."/>
            <person name="Brettin T."/>
            <person name="Bruce D."/>
            <person name="Detter J.C."/>
            <person name="Han C."/>
            <person name="Schmutz J."/>
            <person name="Larimer F."/>
            <person name="Land M."/>
            <person name="Hauser L."/>
            <person name="Kyrpides N."/>
            <person name="Kim E."/>
            <person name="Johnston A.W.B."/>
            <person name="Todd J.D."/>
            <person name="Rogers R."/>
            <person name="Wexler M."/>
            <person name="Bond P.L."/>
            <person name="Li Y."/>
            <person name="Richardson P."/>
        </authorList>
    </citation>
    <scope>NUCLEOTIDE SEQUENCE [LARGE SCALE GENOMIC DNA]</scope>
    <source>
        <strain>MWYL1</strain>
    </source>
</reference>
<keyword id="KW-0349">Heme</keyword>
<keyword id="KW-0376">Hydrogen peroxide</keyword>
<keyword id="KW-0408">Iron</keyword>
<keyword id="KW-0479">Metal-binding</keyword>
<keyword id="KW-0560">Oxidoreductase</keyword>
<keyword id="KW-0575">Peroxidase</keyword>
<dbReference type="EC" id="1.11.1.21" evidence="1"/>
<dbReference type="EMBL" id="CP000749">
    <property type="protein sequence ID" value="ABR70513.1"/>
    <property type="molecule type" value="Genomic_DNA"/>
</dbReference>
<dbReference type="SMR" id="A6VVN4"/>
<dbReference type="STRING" id="400668.Mmwyl1_1585"/>
<dbReference type="PeroxiBase" id="7192">
    <property type="entry name" value="MAspCP01"/>
</dbReference>
<dbReference type="KEGG" id="mmw:Mmwyl1_1585"/>
<dbReference type="eggNOG" id="COG0376">
    <property type="taxonomic scope" value="Bacteria"/>
</dbReference>
<dbReference type="HOGENOM" id="CLU_025424_2_0_6"/>
<dbReference type="GO" id="GO:0005829">
    <property type="term" value="C:cytosol"/>
    <property type="evidence" value="ECO:0007669"/>
    <property type="project" value="TreeGrafter"/>
</dbReference>
<dbReference type="GO" id="GO:0004096">
    <property type="term" value="F:catalase activity"/>
    <property type="evidence" value="ECO:0007669"/>
    <property type="project" value="UniProtKB-UniRule"/>
</dbReference>
<dbReference type="GO" id="GO:0020037">
    <property type="term" value="F:heme binding"/>
    <property type="evidence" value="ECO:0007669"/>
    <property type="project" value="InterPro"/>
</dbReference>
<dbReference type="GO" id="GO:0046872">
    <property type="term" value="F:metal ion binding"/>
    <property type="evidence" value="ECO:0007669"/>
    <property type="project" value="UniProtKB-KW"/>
</dbReference>
<dbReference type="GO" id="GO:0070301">
    <property type="term" value="P:cellular response to hydrogen peroxide"/>
    <property type="evidence" value="ECO:0007669"/>
    <property type="project" value="TreeGrafter"/>
</dbReference>
<dbReference type="GO" id="GO:0042744">
    <property type="term" value="P:hydrogen peroxide catabolic process"/>
    <property type="evidence" value="ECO:0007669"/>
    <property type="project" value="UniProtKB-KW"/>
</dbReference>
<dbReference type="CDD" id="cd00649">
    <property type="entry name" value="catalase_peroxidase_1"/>
    <property type="match status" value="1"/>
</dbReference>
<dbReference type="CDD" id="cd08200">
    <property type="entry name" value="catalase_peroxidase_2"/>
    <property type="match status" value="1"/>
</dbReference>
<dbReference type="FunFam" id="1.10.420.10:FF:000002">
    <property type="entry name" value="Catalase-peroxidase"/>
    <property type="match status" value="1"/>
</dbReference>
<dbReference type="FunFam" id="1.10.420.10:FF:000004">
    <property type="entry name" value="Catalase-peroxidase"/>
    <property type="match status" value="1"/>
</dbReference>
<dbReference type="FunFam" id="1.10.520.10:FF:000002">
    <property type="entry name" value="Catalase-peroxidase"/>
    <property type="match status" value="1"/>
</dbReference>
<dbReference type="Gene3D" id="1.10.520.10">
    <property type="match status" value="2"/>
</dbReference>
<dbReference type="Gene3D" id="1.10.420.10">
    <property type="entry name" value="Peroxidase, domain 2"/>
    <property type="match status" value="2"/>
</dbReference>
<dbReference type="HAMAP" id="MF_01961">
    <property type="entry name" value="Catal_peroxid"/>
    <property type="match status" value="1"/>
</dbReference>
<dbReference type="InterPro" id="IPR000763">
    <property type="entry name" value="Catalase_peroxidase"/>
</dbReference>
<dbReference type="InterPro" id="IPR002016">
    <property type="entry name" value="Haem_peroxidase"/>
</dbReference>
<dbReference type="InterPro" id="IPR010255">
    <property type="entry name" value="Haem_peroxidase_sf"/>
</dbReference>
<dbReference type="InterPro" id="IPR019794">
    <property type="entry name" value="Peroxidases_AS"/>
</dbReference>
<dbReference type="InterPro" id="IPR019793">
    <property type="entry name" value="Peroxidases_heam-ligand_BS"/>
</dbReference>
<dbReference type="NCBIfam" id="TIGR00198">
    <property type="entry name" value="cat_per_HPI"/>
    <property type="match status" value="1"/>
</dbReference>
<dbReference type="NCBIfam" id="NF011635">
    <property type="entry name" value="PRK15061.1"/>
    <property type="match status" value="1"/>
</dbReference>
<dbReference type="PANTHER" id="PTHR30555:SF0">
    <property type="entry name" value="CATALASE-PEROXIDASE"/>
    <property type="match status" value="1"/>
</dbReference>
<dbReference type="PANTHER" id="PTHR30555">
    <property type="entry name" value="HYDROPEROXIDASE I, BIFUNCTIONAL CATALASE-PEROXIDASE"/>
    <property type="match status" value="1"/>
</dbReference>
<dbReference type="Pfam" id="PF00141">
    <property type="entry name" value="peroxidase"/>
    <property type="match status" value="2"/>
</dbReference>
<dbReference type="PRINTS" id="PR00460">
    <property type="entry name" value="BPEROXIDASE"/>
</dbReference>
<dbReference type="PRINTS" id="PR00458">
    <property type="entry name" value="PEROXIDASE"/>
</dbReference>
<dbReference type="SUPFAM" id="SSF48113">
    <property type="entry name" value="Heme-dependent peroxidases"/>
    <property type="match status" value="2"/>
</dbReference>
<dbReference type="PROSITE" id="PS00435">
    <property type="entry name" value="PEROXIDASE_1"/>
    <property type="match status" value="1"/>
</dbReference>
<dbReference type="PROSITE" id="PS00436">
    <property type="entry name" value="PEROXIDASE_2"/>
    <property type="match status" value="1"/>
</dbReference>
<dbReference type="PROSITE" id="PS50873">
    <property type="entry name" value="PEROXIDASE_4"/>
    <property type="match status" value="1"/>
</dbReference>
<comment type="function">
    <text evidence="1">Bifunctional enzyme with both catalase and broad-spectrum peroxidase activity.</text>
</comment>
<comment type="catalytic activity">
    <reaction evidence="1">
        <text>H2O2 + AH2 = A + 2 H2O</text>
        <dbReference type="Rhea" id="RHEA:30275"/>
        <dbReference type="ChEBI" id="CHEBI:13193"/>
        <dbReference type="ChEBI" id="CHEBI:15377"/>
        <dbReference type="ChEBI" id="CHEBI:16240"/>
        <dbReference type="ChEBI" id="CHEBI:17499"/>
        <dbReference type="EC" id="1.11.1.21"/>
    </reaction>
</comment>
<comment type="catalytic activity">
    <reaction evidence="1">
        <text>2 H2O2 = O2 + 2 H2O</text>
        <dbReference type="Rhea" id="RHEA:20309"/>
        <dbReference type="ChEBI" id="CHEBI:15377"/>
        <dbReference type="ChEBI" id="CHEBI:15379"/>
        <dbReference type="ChEBI" id="CHEBI:16240"/>
        <dbReference type="EC" id="1.11.1.21"/>
    </reaction>
</comment>
<comment type="cofactor">
    <cofactor evidence="1">
        <name>heme b</name>
        <dbReference type="ChEBI" id="CHEBI:60344"/>
    </cofactor>
    <text evidence="1">Binds 1 heme b (iron(II)-protoporphyrin IX) group per dimer.</text>
</comment>
<comment type="subunit">
    <text evidence="1">Homodimer or homotetramer.</text>
</comment>
<comment type="PTM">
    <text evidence="1">Formation of the three residue Trp-Tyr-Met cross-link is important for the catalase, but not the peroxidase activity of the enzyme.</text>
</comment>
<comment type="similarity">
    <text evidence="1">Belongs to the peroxidase family. Peroxidase/catalase subfamily.</text>
</comment>
<gene>
    <name evidence="1" type="primary">katG</name>
    <name type="ordered locus">Mmwyl1_1585</name>
</gene>
<organism>
    <name type="scientific">Marinomonas sp. (strain MWYL1)</name>
    <dbReference type="NCBI Taxonomy" id="400668"/>
    <lineage>
        <taxon>Bacteria</taxon>
        <taxon>Pseudomonadati</taxon>
        <taxon>Pseudomonadota</taxon>
        <taxon>Gammaproteobacteria</taxon>
        <taxon>Oceanospirillales</taxon>
        <taxon>Oceanospirillaceae</taxon>
        <taxon>Marinomonas</taxon>
    </lineage>
</organism>
<protein>
    <recommendedName>
        <fullName evidence="1">Catalase-peroxidase</fullName>
        <shortName evidence="1">CP</shortName>
        <ecNumber evidence="1">1.11.1.21</ecNumber>
    </recommendedName>
    <alternativeName>
        <fullName evidence="1">Peroxidase/catalase</fullName>
    </alternativeName>
</protein>
<proteinExistence type="inferred from homology"/>
<sequence length="737" mass="81182">MSKENMSNEGKCPFNHGAAGTNQSSGRGTSNKDWWPNQLNLNILHQHSPKSNPMGEDFDYAKEFNSLDLEAIRQDLFALMTDSQDWWPADYGHYGPFFIRMAWHSAGTYRTADGRGGATSGTQRFAPLNSWPDNVNLDKARRLLWPIKQKYGRKISWADLMILAGNCALESMGFKTFGFAGGRVDVWQPEEDIYWGTEKTWLDDERYTGDRELENPLAAVQMGLIYVNPEGPEGKPDTLASARDIRDTFGRMAMNDEETVALIAGGHTFGKAHGAGDAAQVGADPEAAGIAEQGFGWSNSMGTGKGVDTISSGLEGAWTKSPIAWDNGYFENLFEYDWELTKSPAGAWQWTPKDGAAANSVPDAHDSSKRHAPIMFTSDLALRDDPIYAPISKRFYENPDQLADAFARAWFKLTHRDMGPVARYLGPLVPQEELVWQDPIPAVTYVTVNDQDILDLKAKIQASGLTVAQLVSTAWASASTYRGSDMRGGANGARIRLAPQKDWAVNQPEQLAKVLSVLESIQAEFNRQDSTKQVSLADLIVLGGSVGVEQAAKASGHSVTVPFTAGRADASQEQTDVESFAFLEPAADGFRNYLKGKYTVSAEEMLVDRAQLLTLSAPEMTALLGGLRVLNANVGQSQHGVFTDKPETLSNDFFVNLLDMGTKWFATSEEEEEFQGRDRTTGKIKWTATRADLVFGSNSQLRAIAEVYACSDSQERFVKDFIAAWTKVMELDRFDLA</sequence>
<evidence type="ECO:0000255" key="1">
    <source>
        <dbReference type="HAMAP-Rule" id="MF_01961"/>
    </source>
</evidence>
<evidence type="ECO:0000256" key="2">
    <source>
        <dbReference type="SAM" id="MobiDB-lite"/>
    </source>
</evidence>